<gene>
    <name evidence="2" type="primary">MSD12</name>
</gene>
<comment type="function">
    <text evidence="4">Probable toxin that belongs to the MSDIN-like toxin family responsible for a large number of food poisoning cases and deaths (PubMed:18025465).</text>
</comment>
<comment type="PTM">
    <text evidence="1 4">Processed by the macrocyclase-peptidase enzyme POPB to yield a toxic cyclic nonapeptide (PubMed:18025465). POPB first removes 10 residues from the N-terminus (By similarity). Conformational trapping of the remaining peptide forces the enzyme to release this intermediate rather than proceed to macrocyclization (By similarity). The enzyme rebinds the remaining peptide in a different conformation and catalyzes macrocyclization of the N-terminal 9 residues (By similarity).</text>
</comment>
<comment type="similarity">
    <text evidence="3">Belongs to the MSDIN fungal toxin family.</text>
</comment>
<reference key="1">
    <citation type="journal article" date="2007" name="Proc. Natl. Acad. Sci. U.S.A.">
        <title>Gene family encoding the major toxins of lethal Amanita mushrooms.</title>
        <authorList>
            <person name="Hallen H.E."/>
            <person name="Luo H."/>
            <person name="Scott-Craig J.S."/>
            <person name="Walton J.D."/>
        </authorList>
    </citation>
    <scope>NUCLEOTIDE SEQUENCE [GENOMIC DNA]</scope>
    <scope>FUNCTION</scope>
</reference>
<name>MSD12_AMABI</name>
<keyword id="KW-0800">Toxin</keyword>
<proteinExistence type="inferred from homology"/>
<sequence>MSDINATRLPHPFPLGLQPCAGDVDNLTLTKGEG</sequence>
<feature type="propeptide" id="PRO_0000443668" evidence="4">
    <location>
        <begin position="1"/>
        <end position="10"/>
    </location>
</feature>
<feature type="peptide" id="PRO_0000443669" description="Toxin MSD12" evidence="4">
    <location>
        <begin position="11"/>
        <end position="19"/>
    </location>
</feature>
<feature type="propeptide" id="PRO_0000443670" evidence="4">
    <location>
        <begin position="20"/>
        <end position="34"/>
    </location>
</feature>
<feature type="cross-link" description="Cyclopeptide (His-Pro)" evidence="4">
    <location>
        <begin position="11"/>
        <end position="19"/>
    </location>
</feature>
<organism>
    <name type="scientific">Amanita bisporigera</name>
    <name type="common">Destroying angel</name>
    <dbReference type="NCBI Taxonomy" id="87325"/>
    <lineage>
        <taxon>Eukaryota</taxon>
        <taxon>Fungi</taxon>
        <taxon>Dikarya</taxon>
        <taxon>Basidiomycota</taxon>
        <taxon>Agaricomycotina</taxon>
        <taxon>Agaricomycetes</taxon>
        <taxon>Agaricomycetidae</taxon>
        <taxon>Agaricales</taxon>
        <taxon>Pluteineae</taxon>
        <taxon>Amanitaceae</taxon>
        <taxon>Amanita</taxon>
    </lineage>
</organism>
<protein>
    <recommendedName>
        <fullName evidence="2">MSDIN-like toxin proprotein 12</fullName>
    </recommendedName>
    <component>
        <recommendedName>
            <fullName evidence="2">Toxin MSD12</fullName>
        </recommendedName>
    </component>
</protein>
<evidence type="ECO:0000250" key="1">
    <source>
        <dbReference type="UniProtKB" id="A0A067SLB9"/>
    </source>
</evidence>
<evidence type="ECO:0000303" key="2">
    <source>
    </source>
</evidence>
<evidence type="ECO:0000305" key="3"/>
<evidence type="ECO:0000305" key="4">
    <source>
    </source>
</evidence>
<accession>A8W7P0</accession>
<dbReference type="EMBL" id="EU196155">
    <property type="protein sequence ID" value="ABW87784.1"/>
    <property type="molecule type" value="Genomic_DNA"/>
</dbReference>
<dbReference type="GO" id="GO:0090729">
    <property type="term" value="F:toxin activity"/>
    <property type="evidence" value="ECO:0007669"/>
    <property type="project" value="UniProtKB-KW"/>
</dbReference>
<dbReference type="InterPro" id="IPR027582">
    <property type="entry name" value="Amanitin/phalloidin"/>
</dbReference>
<dbReference type="NCBIfam" id="TIGR04309">
    <property type="entry name" value="amanitin"/>
    <property type="match status" value="1"/>
</dbReference>